<keyword id="KW-0963">Cytoplasm</keyword>
<keyword id="KW-0227">DNA damage</keyword>
<keyword id="KW-0234">DNA repair</keyword>
<keyword id="KW-0255">Endonuclease</keyword>
<keyword id="KW-0378">Hydrolase</keyword>
<keyword id="KW-0540">Nuclease</keyword>
<keyword id="KW-1185">Reference proteome</keyword>
<reference key="1">
    <citation type="journal article" date="2009" name="J. Bacteriol.">
        <title>Complete genome sequence and comparative genome analysis of enteropathogenic Escherichia coli O127:H6 strain E2348/69.</title>
        <authorList>
            <person name="Iguchi A."/>
            <person name="Thomson N.R."/>
            <person name="Ogura Y."/>
            <person name="Saunders D."/>
            <person name="Ooka T."/>
            <person name="Henderson I.R."/>
            <person name="Harris D."/>
            <person name="Asadulghani M."/>
            <person name="Kurokawa K."/>
            <person name="Dean P."/>
            <person name="Kenny B."/>
            <person name="Quail M.A."/>
            <person name="Thurston S."/>
            <person name="Dougan G."/>
            <person name="Hayashi T."/>
            <person name="Parkhill J."/>
            <person name="Frankel G."/>
        </authorList>
    </citation>
    <scope>NUCLEOTIDE SEQUENCE [LARGE SCALE GENOMIC DNA]</scope>
    <source>
        <strain>E2348/69 / EPEC</strain>
    </source>
</reference>
<feature type="chain" id="PRO_1000148397" description="DNA mismatch repair protein MutH">
    <location>
        <begin position="1"/>
        <end position="229"/>
    </location>
</feature>
<sequence length="229" mass="25485">MSQPRPLLSPPETEEQLLAQAQQLSGYTLGELAALAGLVTPENLKRDKGWIGVLLEIWLGASAGSKPEQDFAALGVELKTIPVDSLGRPLETTFVCVAPLTGNSGVTWETSHVRHKLKRVLWIPVEGERSIPLAKRRVGSPLLWSPNEEEDQQLREDWEELMDMIVLGQIERITARHGEYLQIRPKAANAKALTEAIGARGERILTLPRGFYLKKNFTSALLARHFLIQ</sequence>
<gene>
    <name evidence="1" type="primary">mutH</name>
    <name type="ordered locus">E2348C_3101</name>
</gene>
<name>MUTH_ECO27</name>
<organism>
    <name type="scientific">Escherichia coli O127:H6 (strain E2348/69 / EPEC)</name>
    <dbReference type="NCBI Taxonomy" id="574521"/>
    <lineage>
        <taxon>Bacteria</taxon>
        <taxon>Pseudomonadati</taxon>
        <taxon>Pseudomonadota</taxon>
        <taxon>Gammaproteobacteria</taxon>
        <taxon>Enterobacterales</taxon>
        <taxon>Enterobacteriaceae</taxon>
        <taxon>Escherichia</taxon>
    </lineage>
</organism>
<comment type="function">
    <text evidence="1">Sequence-specific endonuclease that cleaves unmethylated GATC sequences. It is involved in DNA mismatch repair.</text>
</comment>
<comment type="subcellular location">
    <subcellularLocation>
        <location evidence="1">Cytoplasm</location>
    </subcellularLocation>
</comment>
<comment type="similarity">
    <text evidence="1">Belongs to the MutH family.</text>
</comment>
<dbReference type="EMBL" id="FM180568">
    <property type="protein sequence ID" value="CAS10649.1"/>
    <property type="molecule type" value="Genomic_DNA"/>
</dbReference>
<dbReference type="RefSeq" id="WP_000082182.1">
    <property type="nucleotide sequence ID" value="NC_011601.1"/>
</dbReference>
<dbReference type="SMR" id="B7UHP9"/>
<dbReference type="KEGG" id="ecg:E2348C_3101"/>
<dbReference type="HOGENOM" id="CLU_086669_0_0_6"/>
<dbReference type="Proteomes" id="UP000008205">
    <property type="component" value="Chromosome"/>
</dbReference>
<dbReference type="GO" id="GO:0005737">
    <property type="term" value="C:cytoplasm"/>
    <property type="evidence" value="ECO:0007669"/>
    <property type="project" value="UniProtKB-SubCell"/>
</dbReference>
<dbReference type="GO" id="GO:0003677">
    <property type="term" value="F:DNA binding"/>
    <property type="evidence" value="ECO:0007669"/>
    <property type="project" value="InterPro"/>
</dbReference>
<dbReference type="GO" id="GO:0004519">
    <property type="term" value="F:endonuclease activity"/>
    <property type="evidence" value="ECO:0007669"/>
    <property type="project" value="UniProtKB-UniRule"/>
</dbReference>
<dbReference type="GO" id="GO:0006304">
    <property type="term" value="P:DNA modification"/>
    <property type="evidence" value="ECO:0007669"/>
    <property type="project" value="InterPro"/>
</dbReference>
<dbReference type="GO" id="GO:0006298">
    <property type="term" value="P:mismatch repair"/>
    <property type="evidence" value="ECO:0007669"/>
    <property type="project" value="UniProtKB-UniRule"/>
</dbReference>
<dbReference type="CDD" id="cd00583">
    <property type="entry name" value="MutH-like"/>
    <property type="match status" value="1"/>
</dbReference>
<dbReference type="FunFam" id="3.40.600.10:FF:000001">
    <property type="entry name" value="DNA mismatch repair protein MutH"/>
    <property type="match status" value="1"/>
</dbReference>
<dbReference type="Gene3D" id="3.40.600.10">
    <property type="entry name" value="DNA mismatch repair MutH/Restriction endonuclease, type II"/>
    <property type="match status" value="1"/>
</dbReference>
<dbReference type="HAMAP" id="MF_00759">
    <property type="entry name" value="MutH"/>
    <property type="match status" value="1"/>
</dbReference>
<dbReference type="InterPro" id="IPR004230">
    <property type="entry name" value="DNA_mismatch_repair_MutH"/>
</dbReference>
<dbReference type="InterPro" id="IPR011337">
    <property type="entry name" value="DNA_rep_MutH/RE_typeII_Sau3AI"/>
</dbReference>
<dbReference type="InterPro" id="IPR037057">
    <property type="entry name" value="DNA_rep_MutH/T2_RE_sf"/>
</dbReference>
<dbReference type="InterPro" id="IPR011335">
    <property type="entry name" value="Restrct_endonuc-II-like"/>
</dbReference>
<dbReference type="NCBIfam" id="TIGR02248">
    <property type="entry name" value="mutH_TIGR"/>
    <property type="match status" value="1"/>
</dbReference>
<dbReference type="NCBIfam" id="NF003458">
    <property type="entry name" value="PRK05070.1"/>
    <property type="match status" value="1"/>
</dbReference>
<dbReference type="Pfam" id="PF02976">
    <property type="entry name" value="MutH"/>
    <property type="match status" value="1"/>
</dbReference>
<dbReference type="SMART" id="SM00927">
    <property type="entry name" value="MutH"/>
    <property type="match status" value="1"/>
</dbReference>
<dbReference type="SUPFAM" id="SSF52980">
    <property type="entry name" value="Restriction endonuclease-like"/>
    <property type="match status" value="1"/>
</dbReference>
<accession>B7UHP9</accession>
<proteinExistence type="inferred from homology"/>
<evidence type="ECO:0000255" key="1">
    <source>
        <dbReference type="HAMAP-Rule" id="MF_00759"/>
    </source>
</evidence>
<protein>
    <recommendedName>
        <fullName evidence="1">DNA mismatch repair protein MutH</fullName>
    </recommendedName>
    <alternativeName>
        <fullName evidence="1">Methyl-directed mismatch repair protein</fullName>
    </alternativeName>
</protein>